<accession>Q6AI08</accession>
<accession>B3KXP3</accession>
<accession>Q6MZX1</accession>
<accession>Q6MZY2</accession>
<accession>Q8TDM9</accession>
<accession>Q9H6B3</accession>
<accession>Q9H6M7</accession>
<evidence type="ECO:0000250" key="1">
    <source>
        <dbReference type="UniProtKB" id="A1EC95"/>
    </source>
</evidence>
<evidence type="ECO:0000256" key="2">
    <source>
        <dbReference type="SAM" id="MobiDB-lite"/>
    </source>
</evidence>
<evidence type="ECO:0000269" key="3">
    <source>
    </source>
</evidence>
<evidence type="ECO:0000305" key="4"/>
<evidence type="ECO:0007744" key="5">
    <source>
    </source>
</evidence>
<evidence type="ECO:0007744" key="6">
    <source>
    </source>
</evidence>
<proteinExistence type="evidence at protein level"/>
<name>HEAT6_HUMAN</name>
<feature type="chain" id="PRO_0000337173" description="HEAT repeat-containing protein 6">
    <location>
        <begin position="1"/>
        <end position="1181"/>
    </location>
</feature>
<feature type="repeat" description="HEAT 1">
    <location>
        <begin position="159"/>
        <end position="198"/>
    </location>
</feature>
<feature type="repeat" description="HEAT 2">
    <location>
        <begin position="452"/>
        <end position="490"/>
    </location>
</feature>
<feature type="repeat" description="HEAT 3">
    <location>
        <begin position="515"/>
        <end position="552"/>
    </location>
</feature>
<feature type="repeat" description="HEAT 4">
    <location>
        <begin position="558"/>
        <end position="595"/>
    </location>
</feature>
<feature type="region of interest" description="Disordered" evidence="2">
    <location>
        <begin position="292"/>
        <end position="347"/>
    </location>
</feature>
<feature type="region of interest" description="Disordered" evidence="2">
    <location>
        <begin position="371"/>
        <end position="390"/>
    </location>
</feature>
<feature type="region of interest" description="Disordered" evidence="2">
    <location>
        <begin position="613"/>
        <end position="646"/>
    </location>
</feature>
<feature type="compositionally biased region" description="Polar residues" evidence="2">
    <location>
        <begin position="300"/>
        <end position="312"/>
    </location>
</feature>
<feature type="compositionally biased region" description="Basic residues" evidence="2">
    <location>
        <begin position="313"/>
        <end position="325"/>
    </location>
</feature>
<feature type="compositionally biased region" description="Polar residues" evidence="2">
    <location>
        <begin position="637"/>
        <end position="646"/>
    </location>
</feature>
<feature type="modified residue" description="Phosphoserine" evidence="6">
    <location>
        <position position="336"/>
    </location>
</feature>
<feature type="modified residue" description="Phosphoserine" evidence="6">
    <location>
        <position position="337"/>
    </location>
</feature>
<feature type="modified residue" description="Phosphoserine" evidence="6">
    <location>
        <position position="399"/>
    </location>
</feature>
<feature type="modified residue" description="Phosphoserine" evidence="6">
    <location>
        <position position="402"/>
    </location>
</feature>
<feature type="modified residue" description="Phosphothreonine" evidence="1">
    <location>
        <position position="618"/>
    </location>
</feature>
<feature type="modified residue" description="Phosphoserine" evidence="5 6">
    <location>
        <position position="643"/>
    </location>
</feature>
<feature type="sequence variant" id="VAR_043670" description="In dbSNP:rs3744376.">
    <original>A</original>
    <variation>V</variation>
    <location>
        <position position="71"/>
    </location>
</feature>
<feature type="sequence variant" id="VAR_043671" description="In dbSNP:rs16943991.">
    <original>S</original>
    <variation>L</variation>
    <location>
        <position position="1006"/>
    </location>
</feature>
<feature type="sequence conflict" description="In Ref. 2; CAE45906." evidence="4" ref="2">
    <original>D</original>
    <variation>G</variation>
    <location>
        <position position="44"/>
    </location>
</feature>
<feature type="sequence conflict" description="In Ref. 1; BAB15229." evidence="4" ref="1">
    <original>S</original>
    <variation>C</variation>
    <location>
        <position position="307"/>
    </location>
</feature>
<feature type="sequence conflict" description="In Ref. 1; BAB15229." evidence="4" ref="1">
    <original>S</original>
    <variation>F</variation>
    <location>
        <position position="336"/>
    </location>
</feature>
<feature type="sequence conflict" description="In Ref. 1; BAB15229." evidence="4" ref="1">
    <original>A</original>
    <variation>V</variation>
    <location>
        <position position="343"/>
    </location>
</feature>
<feature type="sequence conflict" description="In Ref. 1; BAB15229." evidence="4" ref="1">
    <original>SS</original>
    <variation>FF</variation>
    <location>
        <begin position="362"/>
        <end position="363"/>
    </location>
</feature>
<feature type="sequence conflict" description="In Ref. 1; BAB15229." evidence="4" ref="1">
    <original>S</original>
    <variation>Y</variation>
    <location>
        <position position="383"/>
    </location>
</feature>
<feature type="sequence conflict" description="In Ref. 1; BAB15229." evidence="4" ref="1">
    <original>S</original>
    <variation>C</variation>
    <location>
        <position position="385"/>
    </location>
</feature>
<feature type="sequence conflict" description="In Ref. 2; CAE45895." evidence="4" ref="2">
    <original>R</original>
    <variation>C</variation>
    <location>
        <position position="474"/>
    </location>
</feature>
<feature type="sequence conflict" description="In Ref. 1; BAB15229." evidence="4" ref="1">
    <original>A</original>
    <variation>T</variation>
    <location>
        <position position="630"/>
    </location>
</feature>
<feature type="sequence conflict" description="In Ref. 5; AAL83912." evidence="4" ref="5">
    <original>L</original>
    <variation>P</variation>
    <location>
        <position position="730"/>
    </location>
</feature>
<feature type="sequence conflict" description="In Ref. 5; AAL83912." evidence="4" ref="5">
    <original>A</original>
    <variation>T</variation>
    <location>
        <position position="753"/>
    </location>
</feature>
<feature type="sequence conflict" description="In Ref. 5; AAL83912." evidence="4" ref="5">
    <original>F</original>
    <variation>L</variation>
    <location>
        <position position="762"/>
    </location>
</feature>
<feature type="sequence conflict" description="In Ref. 2; CAE45895." evidence="4" ref="2">
    <original>R</original>
    <variation>G</variation>
    <location>
        <position position="778"/>
    </location>
</feature>
<feature type="sequence conflict" description="In Ref. 5; AAL83912." evidence="4" ref="5">
    <original>G</original>
    <variation>R</variation>
    <location>
        <position position="992"/>
    </location>
</feature>
<feature type="sequence conflict" description="In Ref. 2; CAE45906." evidence="4" ref="2">
    <original>L</original>
    <variation>P</variation>
    <location>
        <position position="1004"/>
    </location>
</feature>
<feature type="sequence conflict" description="In Ref. 5; AAL83912." evidence="4" ref="5">
    <original>I</original>
    <variation>F</variation>
    <location>
        <position position="1042"/>
    </location>
</feature>
<reference key="1">
    <citation type="journal article" date="2004" name="Nat. Genet.">
        <title>Complete sequencing and characterization of 21,243 full-length human cDNAs.</title>
        <authorList>
            <person name="Ota T."/>
            <person name="Suzuki Y."/>
            <person name="Nishikawa T."/>
            <person name="Otsuki T."/>
            <person name="Sugiyama T."/>
            <person name="Irie R."/>
            <person name="Wakamatsu A."/>
            <person name="Hayashi K."/>
            <person name="Sato H."/>
            <person name="Nagai K."/>
            <person name="Kimura K."/>
            <person name="Makita H."/>
            <person name="Sekine M."/>
            <person name="Obayashi M."/>
            <person name="Nishi T."/>
            <person name="Shibahara T."/>
            <person name="Tanaka T."/>
            <person name="Ishii S."/>
            <person name="Yamamoto J."/>
            <person name="Saito K."/>
            <person name="Kawai Y."/>
            <person name="Isono Y."/>
            <person name="Nakamura Y."/>
            <person name="Nagahari K."/>
            <person name="Murakami K."/>
            <person name="Yasuda T."/>
            <person name="Iwayanagi T."/>
            <person name="Wagatsuma M."/>
            <person name="Shiratori A."/>
            <person name="Sudo H."/>
            <person name="Hosoiri T."/>
            <person name="Kaku Y."/>
            <person name="Kodaira H."/>
            <person name="Kondo H."/>
            <person name="Sugawara M."/>
            <person name="Takahashi M."/>
            <person name="Kanda K."/>
            <person name="Yokoi T."/>
            <person name="Furuya T."/>
            <person name="Kikkawa E."/>
            <person name="Omura Y."/>
            <person name="Abe K."/>
            <person name="Kamihara K."/>
            <person name="Katsuta N."/>
            <person name="Sato K."/>
            <person name="Tanikawa M."/>
            <person name="Yamazaki M."/>
            <person name="Ninomiya K."/>
            <person name="Ishibashi T."/>
            <person name="Yamashita H."/>
            <person name="Murakawa K."/>
            <person name="Fujimori K."/>
            <person name="Tanai H."/>
            <person name="Kimata M."/>
            <person name="Watanabe M."/>
            <person name="Hiraoka S."/>
            <person name="Chiba Y."/>
            <person name="Ishida S."/>
            <person name="Ono Y."/>
            <person name="Takiguchi S."/>
            <person name="Watanabe S."/>
            <person name="Yosida M."/>
            <person name="Hotuta T."/>
            <person name="Kusano J."/>
            <person name="Kanehori K."/>
            <person name="Takahashi-Fujii A."/>
            <person name="Hara H."/>
            <person name="Tanase T.-O."/>
            <person name="Nomura Y."/>
            <person name="Togiya S."/>
            <person name="Komai F."/>
            <person name="Hara R."/>
            <person name="Takeuchi K."/>
            <person name="Arita M."/>
            <person name="Imose N."/>
            <person name="Musashino K."/>
            <person name="Yuuki H."/>
            <person name="Oshima A."/>
            <person name="Sasaki N."/>
            <person name="Aotsuka S."/>
            <person name="Yoshikawa Y."/>
            <person name="Matsunawa H."/>
            <person name="Ichihara T."/>
            <person name="Shiohata N."/>
            <person name="Sano S."/>
            <person name="Moriya S."/>
            <person name="Momiyama H."/>
            <person name="Satoh N."/>
            <person name="Takami S."/>
            <person name="Terashima Y."/>
            <person name="Suzuki O."/>
            <person name="Nakagawa S."/>
            <person name="Senoh A."/>
            <person name="Mizoguchi H."/>
            <person name="Goto Y."/>
            <person name="Shimizu F."/>
            <person name="Wakebe H."/>
            <person name="Hishigaki H."/>
            <person name="Watanabe T."/>
            <person name="Sugiyama A."/>
            <person name="Takemoto M."/>
            <person name="Kawakami B."/>
            <person name="Yamazaki M."/>
            <person name="Watanabe K."/>
            <person name="Kumagai A."/>
            <person name="Itakura S."/>
            <person name="Fukuzumi Y."/>
            <person name="Fujimori Y."/>
            <person name="Komiyama M."/>
            <person name="Tashiro H."/>
            <person name="Tanigami A."/>
            <person name="Fujiwara T."/>
            <person name="Ono T."/>
            <person name="Yamada K."/>
            <person name="Fujii Y."/>
            <person name="Ozaki K."/>
            <person name="Hirao M."/>
            <person name="Ohmori Y."/>
            <person name="Kawabata A."/>
            <person name="Hikiji T."/>
            <person name="Kobatake N."/>
            <person name="Inagaki H."/>
            <person name="Ikema Y."/>
            <person name="Okamoto S."/>
            <person name="Okitani R."/>
            <person name="Kawakami T."/>
            <person name="Noguchi S."/>
            <person name="Itoh T."/>
            <person name="Shigeta K."/>
            <person name="Senba T."/>
            <person name="Matsumura K."/>
            <person name="Nakajima Y."/>
            <person name="Mizuno T."/>
            <person name="Morinaga M."/>
            <person name="Sasaki M."/>
            <person name="Togashi T."/>
            <person name="Oyama M."/>
            <person name="Hata H."/>
            <person name="Watanabe M."/>
            <person name="Komatsu T."/>
            <person name="Mizushima-Sugano J."/>
            <person name="Satoh T."/>
            <person name="Shirai Y."/>
            <person name="Takahashi Y."/>
            <person name="Nakagawa K."/>
            <person name="Okumura K."/>
            <person name="Nagase T."/>
            <person name="Nomura N."/>
            <person name="Kikuchi H."/>
            <person name="Masuho Y."/>
            <person name="Yamashita R."/>
            <person name="Nakai K."/>
            <person name="Yada T."/>
            <person name="Nakamura Y."/>
            <person name="Ohara O."/>
            <person name="Isogai T."/>
            <person name="Sugano S."/>
        </authorList>
    </citation>
    <scope>NUCLEOTIDE SEQUENCE [LARGE SCALE MRNA]</scope>
    <source>
        <tissue>Hepatoma</tissue>
        <tissue>Kidney</tissue>
    </source>
</reference>
<reference key="2">
    <citation type="journal article" date="2007" name="BMC Genomics">
        <title>The full-ORF clone resource of the German cDNA consortium.</title>
        <authorList>
            <person name="Bechtel S."/>
            <person name="Rosenfelder H."/>
            <person name="Duda A."/>
            <person name="Schmidt C.P."/>
            <person name="Ernst U."/>
            <person name="Wellenreuther R."/>
            <person name="Mehrle A."/>
            <person name="Schuster C."/>
            <person name="Bahr A."/>
            <person name="Bloecker H."/>
            <person name="Heubner D."/>
            <person name="Hoerlein A."/>
            <person name="Michel G."/>
            <person name="Wedler H."/>
            <person name="Koehrer K."/>
            <person name="Ottenwaelder B."/>
            <person name="Poustka A."/>
            <person name="Wiemann S."/>
            <person name="Schupp I."/>
        </authorList>
    </citation>
    <scope>NUCLEOTIDE SEQUENCE [LARGE SCALE MRNA]</scope>
    <source>
        <tissue>Colon endothelium</tissue>
        <tissue>Rectum tumor</tissue>
        <tissue>Uterine endothelium</tissue>
    </source>
</reference>
<reference key="3">
    <citation type="submission" date="2005-09" db="EMBL/GenBank/DDBJ databases">
        <authorList>
            <person name="Mural R.J."/>
            <person name="Istrail S."/>
            <person name="Sutton G.G."/>
            <person name="Florea L."/>
            <person name="Halpern A.L."/>
            <person name="Mobarry C.M."/>
            <person name="Lippert R."/>
            <person name="Walenz B."/>
            <person name="Shatkay H."/>
            <person name="Dew I."/>
            <person name="Miller J.R."/>
            <person name="Flanigan M.J."/>
            <person name="Edwards N.J."/>
            <person name="Bolanos R."/>
            <person name="Fasulo D."/>
            <person name="Halldorsson B.V."/>
            <person name="Hannenhalli S."/>
            <person name="Turner R."/>
            <person name="Yooseph S."/>
            <person name="Lu F."/>
            <person name="Nusskern D.R."/>
            <person name="Shue B.C."/>
            <person name="Zheng X.H."/>
            <person name="Zhong F."/>
            <person name="Delcher A.L."/>
            <person name="Huson D.H."/>
            <person name="Kravitz S.A."/>
            <person name="Mouchard L."/>
            <person name="Reinert K."/>
            <person name="Remington K.A."/>
            <person name="Clark A.G."/>
            <person name="Waterman M.S."/>
            <person name="Eichler E.E."/>
            <person name="Adams M.D."/>
            <person name="Hunkapiller M.W."/>
            <person name="Myers E.W."/>
            <person name="Venter J.C."/>
        </authorList>
    </citation>
    <scope>NUCLEOTIDE SEQUENCE [LARGE SCALE GENOMIC DNA]</scope>
</reference>
<reference key="4">
    <citation type="journal article" date="2004" name="Genome Res.">
        <title>The status, quality, and expansion of the NIH full-length cDNA project: the Mammalian Gene Collection (MGC).</title>
        <authorList>
            <consortium name="The MGC Project Team"/>
        </authorList>
    </citation>
    <scope>NUCLEOTIDE SEQUENCE [LARGE SCALE MRNA]</scope>
</reference>
<reference key="5">
    <citation type="journal article" date="2001" name="Cancer Res.">
        <title>Structural analysis of the 17q22-23 amplicon identifies several independent targets of amplification in breast cancer cell lines and tumors.</title>
        <authorList>
            <person name="Wu G.-J."/>
            <person name="Sinclair C."/>
            <person name="Hinson S."/>
            <person name="Ingle J.N."/>
            <person name="Roche P.C."/>
            <person name="Couch F.J."/>
        </authorList>
    </citation>
    <scope>NUCLEOTIDE SEQUENCE [MRNA] OF 36-1181</scope>
    <scope>TISSUE SPECIFICITY</scope>
</reference>
<reference key="6">
    <citation type="journal article" date="2008" name="Mol. Cell">
        <title>Kinase-selective enrichment enables quantitative phosphoproteomics of the kinome across the cell cycle.</title>
        <authorList>
            <person name="Daub H."/>
            <person name="Olsen J.V."/>
            <person name="Bairlein M."/>
            <person name="Gnad F."/>
            <person name="Oppermann F.S."/>
            <person name="Korner R."/>
            <person name="Greff Z."/>
            <person name="Keri G."/>
            <person name="Stemmann O."/>
            <person name="Mann M."/>
        </authorList>
    </citation>
    <scope>IDENTIFICATION BY MASS SPECTROMETRY [LARGE SCALE ANALYSIS]</scope>
    <source>
        <tissue>Cervix carcinoma</tissue>
    </source>
</reference>
<reference key="7">
    <citation type="journal article" date="2008" name="Proc. Natl. Acad. Sci. U.S.A.">
        <title>A quantitative atlas of mitotic phosphorylation.</title>
        <authorList>
            <person name="Dephoure N."/>
            <person name="Zhou C."/>
            <person name="Villen J."/>
            <person name="Beausoleil S.A."/>
            <person name="Bakalarski C.E."/>
            <person name="Elledge S.J."/>
            <person name="Gygi S.P."/>
        </authorList>
    </citation>
    <scope>IDENTIFICATION BY MASS SPECTROMETRY [LARGE SCALE ANALYSIS]</scope>
    <source>
        <tissue>Cervix carcinoma</tissue>
    </source>
</reference>
<reference key="8">
    <citation type="journal article" date="2009" name="Anal. Chem.">
        <title>Lys-N and trypsin cover complementary parts of the phosphoproteome in a refined SCX-based approach.</title>
        <authorList>
            <person name="Gauci S."/>
            <person name="Helbig A.O."/>
            <person name="Slijper M."/>
            <person name="Krijgsveld J."/>
            <person name="Heck A.J."/>
            <person name="Mohammed S."/>
        </authorList>
    </citation>
    <scope>IDENTIFICATION BY MASS SPECTROMETRY [LARGE SCALE ANALYSIS]</scope>
</reference>
<reference key="9">
    <citation type="journal article" date="2009" name="Mol. Cell. Proteomics">
        <title>Large-scale proteomics analysis of the human kinome.</title>
        <authorList>
            <person name="Oppermann F.S."/>
            <person name="Gnad F."/>
            <person name="Olsen J.V."/>
            <person name="Hornberger R."/>
            <person name="Greff Z."/>
            <person name="Keri G."/>
            <person name="Mann M."/>
            <person name="Daub H."/>
        </authorList>
    </citation>
    <scope>IDENTIFICATION BY MASS SPECTROMETRY [LARGE SCALE ANALYSIS]</scope>
</reference>
<reference key="10">
    <citation type="journal article" date="2009" name="Sci. Signal.">
        <title>Quantitative phosphoproteomic analysis of T cell receptor signaling reveals system-wide modulation of protein-protein interactions.</title>
        <authorList>
            <person name="Mayya V."/>
            <person name="Lundgren D.H."/>
            <person name="Hwang S.-I."/>
            <person name="Rezaul K."/>
            <person name="Wu L."/>
            <person name="Eng J.K."/>
            <person name="Rodionov V."/>
            <person name="Han D.K."/>
        </authorList>
    </citation>
    <scope>PHOSPHORYLATION [LARGE SCALE ANALYSIS] AT SER-643</scope>
    <scope>IDENTIFICATION BY MASS SPECTROMETRY [LARGE SCALE ANALYSIS]</scope>
    <source>
        <tissue>Leukemic T-cell</tissue>
    </source>
</reference>
<reference key="11">
    <citation type="journal article" date="2010" name="Sci. Signal.">
        <title>Quantitative phosphoproteomics reveals widespread full phosphorylation site occupancy during mitosis.</title>
        <authorList>
            <person name="Olsen J.V."/>
            <person name="Vermeulen M."/>
            <person name="Santamaria A."/>
            <person name="Kumar C."/>
            <person name="Miller M.L."/>
            <person name="Jensen L.J."/>
            <person name="Gnad F."/>
            <person name="Cox J."/>
            <person name="Jensen T.S."/>
            <person name="Nigg E.A."/>
            <person name="Brunak S."/>
            <person name="Mann M."/>
        </authorList>
    </citation>
    <scope>IDENTIFICATION BY MASS SPECTROMETRY [LARGE SCALE ANALYSIS]</scope>
    <source>
        <tissue>Cervix carcinoma</tissue>
    </source>
</reference>
<reference key="12">
    <citation type="journal article" date="2011" name="BMC Syst. Biol.">
        <title>Initial characterization of the human central proteome.</title>
        <authorList>
            <person name="Burkard T.R."/>
            <person name="Planyavsky M."/>
            <person name="Kaupe I."/>
            <person name="Breitwieser F.P."/>
            <person name="Buerckstuemmer T."/>
            <person name="Bennett K.L."/>
            <person name="Superti-Furga G."/>
            <person name="Colinge J."/>
        </authorList>
    </citation>
    <scope>IDENTIFICATION BY MASS SPECTROMETRY [LARGE SCALE ANALYSIS]</scope>
</reference>
<reference key="13">
    <citation type="journal article" date="2011" name="Sci. Signal.">
        <title>System-wide temporal characterization of the proteome and phosphoproteome of human embryonic stem cell differentiation.</title>
        <authorList>
            <person name="Rigbolt K.T."/>
            <person name="Prokhorova T.A."/>
            <person name="Akimov V."/>
            <person name="Henningsen J."/>
            <person name="Johansen P.T."/>
            <person name="Kratchmarova I."/>
            <person name="Kassem M."/>
            <person name="Mann M."/>
            <person name="Olsen J.V."/>
            <person name="Blagoev B."/>
        </authorList>
    </citation>
    <scope>IDENTIFICATION BY MASS SPECTROMETRY [LARGE SCALE ANALYSIS]</scope>
</reference>
<reference key="14">
    <citation type="journal article" date="2013" name="J. Proteome Res.">
        <title>Toward a comprehensive characterization of a human cancer cell phosphoproteome.</title>
        <authorList>
            <person name="Zhou H."/>
            <person name="Di Palma S."/>
            <person name="Preisinger C."/>
            <person name="Peng M."/>
            <person name="Polat A.N."/>
            <person name="Heck A.J."/>
            <person name="Mohammed S."/>
        </authorList>
    </citation>
    <scope>PHOSPHORYLATION [LARGE SCALE ANALYSIS] AT SER-336; SER-337; SER-399; SER-402 AND SER-643</scope>
    <scope>IDENTIFICATION BY MASS SPECTROMETRY [LARGE SCALE ANALYSIS]</scope>
    <source>
        <tissue>Cervix carcinoma</tissue>
        <tissue>Erythroleukemia</tissue>
    </source>
</reference>
<keyword id="KW-0597">Phosphoprotein</keyword>
<keyword id="KW-1267">Proteomics identification</keyword>
<keyword id="KW-1185">Reference proteome</keyword>
<keyword id="KW-0677">Repeat</keyword>
<organism>
    <name type="scientific">Homo sapiens</name>
    <name type="common">Human</name>
    <dbReference type="NCBI Taxonomy" id="9606"/>
    <lineage>
        <taxon>Eukaryota</taxon>
        <taxon>Metazoa</taxon>
        <taxon>Chordata</taxon>
        <taxon>Craniata</taxon>
        <taxon>Vertebrata</taxon>
        <taxon>Euteleostomi</taxon>
        <taxon>Mammalia</taxon>
        <taxon>Eutheria</taxon>
        <taxon>Euarchontoglires</taxon>
        <taxon>Primates</taxon>
        <taxon>Haplorrhini</taxon>
        <taxon>Catarrhini</taxon>
        <taxon>Hominidae</taxon>
        <taxon>Homo</taxon>
    </lineage>
</organism>
<protein>
    <recommendedName>
        <fullName>HEAT repeat-containing protein 6</fullName>
    </recommendedName>
    <alternativeName>
        <fullName>Amplified in breast cancer protein 1</fullName>
    </alternativeName>
</protein>
<dbReference type="EMBL" id="AK025740">
    <property type="protein sequence ID" value="BAB15229.1"/>
    <property type="status" value="ALT_INIT"/>
    <property type="molecule type" value="mRNA"/>
</dbReference>
<dbReference type="EMBL" id="AK026070">
    <property type="protein sequence ID" value="BAB15348.1"/>
    <property type="status" value="ALT_INIT"/>
    <property type="molecule type" value="mRNA"/>
</dbReference>
<dbReference type="EMBL" id="AK127708">
    <property type="protein sequence ID" value="BAG54555.1"/>
    <property type="molecule type" value="mRNA"/>
</dbReference>
<dbReference type="EMBL" id="BX640819">
    <property type="protein sequence ID" value="CAE45895.1"/>
    <property type="molecule type" value="mRNA"/>
</dbReference>
<dbReference type="EMBL" id="BX640831">
    <property type="protein sequence ID" value="CAE45906.1"/>
    <property type="molecule type" value="mRNA"/>
</dbReference>
<dbReference type="EMBL" id="CR627418">
    <property type="protein sequence ID" value="CAH10506.1"/>
    <property type="molecule type" value="mRNA"/>
</dbReference>
<dbReference type="EMBL" id="CH471109">
    <property type="protein sequence ID" value="EAW94369.1"/>
    <property type="molecule type" value="Genomic_DNA"/>
</dbReference>
<dbReference type="EMBL" id="BC119813">
    <property type="protein sequence ID" value="AAI19814.1"/>
    <property type="molecule type" value="mRNA"/>
</dbReference>
<dbReference type="EMBL" id="AF349752">
    <property type="protein sequence ID" value="AAL83912.1"/>
    <property type="status" value="ALT_INIT"/>
    <property type="molecule type" value="mRNA"/>
</dbReference>
<dbReference type="CCDS" id="CCDS11623.1"/>
<dbReference type="RefSeq" id="NP_071353.4">
    <property type="nucleotide sequence ID" value="NM_022070.4"/>
</dbReference>
<dbReference type="BioGRID" id="121976">
    <property type="interactions" value="125"/>
</dbReference>
<dbReference type="FunCoup" id="Q6AI08">
    <property type="interactions" value="1950"/>
</dbReference>
<dbReference type="IntAct" id="Q6AI08">
    <property type="interactions" value="65"/>
</dbReference>
<dbReference type="MINT" id="Q6AI08"/>
<dbReference type="STRING" id="9606.ENSP00000184956"/>
<dbReference type="GlyGen" id="Q6AI08">
    <property type="glycosylation" value="1 site, 1 O-linked glycan (1 site)"/>
</dbReference>
<dbReference type="iPTMnet" id="Q6AI08"/>
<dbReference type="PhosphoSitePlus" id="Q6AI08"/>
<dbReference type="SwissPalm" id="Q6AI08"/>
<dbReference type="BioMuta" id="HEATR6"/>
<dbReference type="DMDM" id="74724525"/>
<dbReference type="jPOST" id="Q6AI08"/>
<dbReference type="MassIVE" id="Q6AI08"/>
<dbReference type="PaxDb" id="9606-ENSP00000184956"/>
<dbReference type="PeptideAtlas" id="Q6AI08"/>
<dbReference type="ProteomicsDB" id="66184"/>
<dbReference type="Pumba" id="Q6AI08"/>
<dbReference type="Antibodypedia" id="31155">
    <property type="antibodies" value="54 antibodies from 11 providers"/>
</dbReference>
<dbReference type="DNASU" id="63897"/>
<dbReference type="Ensembl" id="ENST00000184956.11">
    <property type="protein sequence ID" value="ENSP00000184956.5"/>
    <property type="gene ID" value="ENSG00000068097.16"/>
</dbReference>
<dbReference type="GeneID" id="63897"/>
<dbReference type="KEGG" id="hsa:63897"/>
<dbReference type="MANE-Select" id="ENST00000184956.11">
    <property type="protein sequence ID" value="ENSP00000184956.5"/>
    <property type="RefSeq nucleotide sequence ID" value="NM_022070.5"/>
    <property type="RefSeq protein sequence ID" value="NP_071353.4"/>
</dbReference>
<dbReference type="UCSC" id="uc002iyk.2">
    <property type="organism name" value="human"/>
</dbReference>
<dbReference type="AGR" id="HGNC:24076"/>
<dbReference type="CTD" id="63897"/>
<dbReference type="DisGeNET" id="63897"/>
<dbReference type="GeneCards" id="HEATR6"/>
<dbReference type="HGNC" id="HGNC:24076">
    <property type="gene designation" value="HEATR6"/>
</dbReference>
<dbReference type="HPA" id="ENSG00000068097">
    <property type="expression patterns" value="Low tissue specificity"/>
</dbReference>
<dbReference type="neXtProt" id="NX_Q6AI08"/>
<dbReference type="OpenTargets" id="ENSG00000068097"/>
<dbReference type="PharmGKB" id="PA162390774"/>
<dbReference type="VEuPathDB" id="HostDB:ENSG00000068097"/>
<dbReference type="eggNOG" id="KOG4535">
    <property type="taxonomic scope" value="Eukaryota"/>
</dbReference>
<dbReference type="GeneTree" id="ENSGT00390000016675"/>
<dbReference type="HOGENOM" id="CLU_007141_1_0_1"/>
<dbReference type="InParanoid" id="Q6AI08"/>
<dbReference type="OMA" id="NIWDMEI"/>
<dbReference type="OrthoDB" id="66533at2759"/>
<dbReference type="PAN-GO" id="Q6AI08">
    <property type="GO annotations" value="0 GO annotations based on evolutionary models"/>
</dbReference>
<dbReference type="PhylomeDB" id="Q6AI08"/>
<dbReference type="TreeFam" id="TF324244"/>
<dbReference type="PathwayCommons" id="Q6AI08"/>
<dbReference type="SignaLink" id="Q6AI08"/>
<dbReference type="BioGRID-ORCS" id="63897">
    <property type="hits" value="35 hits in 1147 CRISPR screens"/>
</dbReference>
<dbReference type="ChiTaRS" id="HEATR6">
    <property type="organism name" value="human"/>
</dbReference>
<dbReference type="GenomeRNAi" id="63897"/>
<dbReference type="Pharos" id="Q6AI08">
    <property type="development level" value="Tbio"/>
</dbReference>
<dbReference type="PRO" id="PR:Q6AI08"/>
<dbReference type="Proteomes" id="UP000005640">
    <property type="component" value="Chromosome 17"/>
</dbReference>
<dbReference type="RNAct" id="Q6AI08">
    <property type="molecule type" value="protein"/>
</dbReference>
<dbReference type="Bgee" id="ENSG00000068097">
    <property type="expression patterns" value="Expressed in ventricular zone and 178 other cell types or tissues"/>
</dbReference>
<dbReference type="ExpressionAtlas" id="Q6AI08">
    <property type="expression patterns" value="baseline and differential"/>
</dbReference>
<dbReference type="GO" id="GO:0003723">
    <property type="term" value="F:RNA binding"/>
    <property type="evidence" value="ECO:0007005"/>
    <property type="project" value="UniProtKB"/>
</dbReference>
<dbReference type="FunFam" id="1.25.10.10:FF:000398">
    <property type="entry name" value="HEAT repeat containing 6"/>
    <property type="match status" value="1"/>
</dbReference>
<dbReference type="FunFam" id="1.25.10.10:FF:000171">
    <property type="entry name" value="HEAT repeat-containing protein 6"/>
    <property type="match status" value="1"/>
</dbReference>
<dbReference type="FunFam" id="1.25.10.10:FF:000505">
    <property type="entry name" value="HEAT repeat-containing protein 6 isoform X1"/>
    <property type="match status" value="1"/>
</dbReference>
<dbReference type="Gene3D" id="1.25.10.10">
    <property type="entry name" value="Leucine-rich Repeat Variant"/>
    <property type="match status" value="3"/>
</dbReference>
<dbReference type="InterPro" id="IPR011989">
    <property type="entry name" value="ARM-like"/>
</dbReference>
<dbReference type="InterPro" id="IPR016024">
    <property type="entry name" value="ARM-type_fold"/>
</dbReference>
<dbReference type="InterPro" id="IPR025283">
    <property type="entry name" value="DUF4042"/>
</dbReference>
<dbReference type="InterPro" id="IPR052107">
    <property type="entry name" value="HEAT6"/>
</dbReference>
<dbReference type="PANTHER" id="PTHR13366:SF0">
    <property type="entry name" value="HEAT REPEAT-CONTAINING PROTEIN 6"/>
    <property type="match status" value="1"/>
</dbReference>
<dbReference type="PANTHER" id="PTHR13366">
    <property type="entry name" value="MALARIA ANTIGEN-RELATED"/>
    <property type="match status" value="1"/>
</dbReference>
<dbReference type="Pfam" id="PF13251">
    <property type="entry name" value="DUF4042"/>
    <property type="match status" value="1"/>
</dbReference>
<dbReference type="SUPFAM" id="SSF48371">
    <property type="entry name" value="ARM repeat"/>
    <property type="match status" value="2"/>
</dbReference>
<comment type="function">
    <text>Amplification-dependent oncogene.</text>
</comment>
<comment type="tissue specificity">
    <text evidence="3">Amplified in breast cancer cell lines MCF-7 and BT-474.</text>
</comment>
<comment type="miscellaneous">
    <text>17q23 region is one of the most commonly amplified regions in breast cancer and therefore may harbor genes important for breast cancer development and progression.</text>
</comment>
<comment type="sequence caution" evidence="4">
    <conflict type="erroneous initiation">
        <sequence resource="EMBL-CDS" id="AAL83912"/>
    </conflict>
</comment>
<comment type="sequence caution" evidence="4">
    <conflict type="erroneous initiation">
        <sequence resource="EMBL-CDS" id="BAB15229"/>
    </conflict>
</comment>
<comment type="sequence caution" evidence="4">
    <conflict type="erroneous initiation">
        <sequence resource="EMBL-CDS" id="BAB15348"/>
    </conflict>
</comment>
<gene>
    <name type="primary">HEATR6</name>
    <name type="synonym">ABC1</name>
</gene>
<sequence>MAAVQVVGSWPSVQPREAPREAIPERGNGFRLLSARLCALRPDDSSSARTEIHLLFDQLISENYSEGSGVAPEDVSALLVQACRLVPLNQNHLVSKVSQLIHHLLNRLQVIVDEQHLDFLLAYTISAIHQCSSWTHREILQALAALVYCNGSKCQKYLPELLGNTGLLMKLSDLAQSDPEVRRAAVHCMANLCLSVPGQPYLEEPYQNVCFQAFLTILQSPKSSDMDDITFCMLLQNALKGIQSLLNGGRMKLTQTDELGALLAVLKKFMFHGLPGLNIEMPTVLYPTPLPQYDGRTPIKPQQSESSASRPTLNKKKKSKVKPKKIQQGEEEEKESSGEIEAAPVTGTGRVNLHEGNTWCPSSLGVQSLPLDGSGAAEKDGVSSSFSSSSWKRVSSSESDFSDAEGGMQSKMRSYQAKVRQGALVCFLSTIKSIEKKVLYGYWSAFIPDTPELGSPQSVSLMTLTLKDPSPKTRACALQVLSAILEGSKQFLSVAEDTSDHRRAFTPFSVMIACSIRELHRCLLLALVAESSSQTVTQIIKCLANLVSNAPYDRLKLSLLTKVWNQIKPYIRHKDVNVRVSSLTLLGAIVSTHAPLPEVQLLLQQPCSSGLGNSNSATPHLSPPDWWKKAPAGPSLEETSVSSPKGSSEPCWLIRLCISIVVLPKEDSCSGSDAGSAAGSTYEPSPMRLEALQVLTLLARGYFSMTQAYLMELGEVICKCMGEADPSIQLHGAKLLEELGTGLIQQYKPDSTAAPDQRAPVFLVVMFWTMMLNGPLPRALQNSEHPTLQASACDALSSILPEAFSNLPNDRQMLCITVLLGLNDSKNRLVKAATSRALGVYVLFPCLRQDVIFVADAANAILMSLEDKSLNVRAKAAWSLGNLTDTLIVNMETPDPSFQEEFSGLLLLKMLRSAIEASKDKDKVKSNAVRALGNLLHFLQPSHIEKPTFAEIIEESIQALISTVLTEAAMKVRWNACYAMGNVFKNPALPLGTAPWTSQAYNALTSVVTSCKNFKVRIRSAAALSVPGKREQYGSVDQYARIWNALVTALQKSEDTIDFLEFKYCVSLRTQICQALIHLLSLASASDLPCMKETLELSGNMVQSYILQFLKSGAEGDDTGAPHSPQERDQMVRMALKHMGSIQAPTGDTARRAIMGFLEEILAVCFDSSGSQGALPGLTNQ</sequence>